<name>DPCKG_METAR</name>
<comment type="function">
    <text evidence="1">Catalyzes the GTP-dependent phosphorylation of the 3'-hydroxyl group of dephosphocoenzyme A to form coenzyme A (CoA).</text>
</comment>
<comment type="catalytic activity">
    <reaction evidence="1">
        <text>3'-dephospho-CoA + GTP = GDP + CoA + H(+)</text>
        <dbReference type="Rhea" id="RHEA:61156"/>
        <dbReference type="ChEBI" id="CHEBI:15378"/>
        <dbReference type="ChEBI" id="CHEBI:37565"/>
        <dbReference type="ChEBI" id="CHEBI:57287"/>
        <dbReference type="ChEBI" id="CHEBI:57328"/>
        <dbReference type="ChEBI" id="CHEBI:58189"/>
        <dbReference type="EC" id="2.7.1.237"/>
    </reaction>
</comment>
<comment type="pathway">
    <text evidence="1">Cofactor biosynthesis; coenzyme A biosynthesis.</text>
</comment>
<comment type="similarity">
    <text evidence="1">Belongs to the GTP-dependent DPCK family.</text>
</comment>
<sequence length="176" mass="19412">MIYKLTPALRDDLKTPFGTLYPGKGESCLAKVVKALDKPPKIISIGDVTTFYLIKAGVVPDMCLVDDQTMRLPVDHEVRKGTSHHTFKELRVSNPAGVVTQALMDLIKDNMSSTEPVRIFVDGEEDLAVIPACLYAPIGSAVIYGQPNEGVVVVRVTEEKRKETKALLDKMERVDE</sequence>
<accession>Q0W6G4</accession>
<gene>
    <name type="ordered locus">UNCMA_21560</name>
    <name type="ORF">RCIX625</name>
</gene>
<feature type="chain" id="PRO_0000380069" description="GTP-dependent dephospho-CoA kinase">
    <location>
        <begin position="1"/>
        <end position="176"/>
    </location>
</feature>
<feature type="binding site" evidence="1">
    <location>
        <position position="47"/>
    </location>
    <ligand>
        <name>GTP</name>
        <dbReference type="ChEBI" id="CHEBI:37565"/>
    </ligand>
</feature>
<feature type="binding site" evidence="1">
    <location>
        <position position="48"/>
    </location>
    <ligand>
        <name>GTP</name>
        <dbReference type="ChEBI" id="CHEBI:37565"/>
    </ligand>
</feature>
<feature type="binding site" evidence="1">
    <location>
        <position position="66"/>
    </location>
    <ligand>
        <name>GTP</name>
        <dbReference type="ChEBI" id="CHEBI:37565"/>
    </ligand>
</feature>
<feature type="binding site" evidence="1">
    <location>
        <position position="125"/>
    </location>
    <ligand>
        <name>GTP</name>
        <dbReference type="ChEBI" id="CHEBI:37565"/>
    </ligand>
</feature>
<keyword id="KW-0173">Coenzyme A biosynthesis</keyword>
<keyword id="KW-0342">GTP-binding</keyword>
<keyword id="KW-0418">Kinase</keyword>
<keyword id="KW-0547">Nucleotide-binding</keyword>
<keyword id="KW-1185">Reference proteome</keyword>
<keyword id="KW-0808">Transferase</keyword>
<proteinExistence type="inferred from homology"/>
<protein>
    <recommendedName>
        <fullName evidence="1">GTP-dependent dephospho-CoA kinase</fullName>
        <ecNumber evidence="1">2.7.1.237</ecNumber>
    </recommendedName>
    <alternativeName>
        <fullName evidence="1">Dephospho-coenzyme A kinase</fullName>
        <shortName evidence="1">DPCK</shortName>
    </alternativeName>
</protein>
<organism>
    <name type="scientific">Methanocella arvoryzae (strain DSM 22066 / NBRC 105507 / MRE50)</name>
    <dbReference type="NCBI Taxonomy" id="351160"/>
    <lineage>
        <taxon>Archaea</taxon>
        <taxon>Methanobacteriati</taxon>
        <taxon>Methanobacteriota</taxon>
        <taxon>Stenosarchaea group</taxon>
        <taxon>Methanomicrobia</taxon>
        <taxon>Methanocellales</taxon>
        <taxon>Methanocellaceae</taxon>
        <taxon>Methanocella</taxon>
    </lineage>
</organism>
<evidence type="ECO:0000255" key="1">
    <source>
        <dbReference type="HAMAP-Rule" id="MF_00590"/>
    </source>
</evidence>
<reference key="1">
    <citation type="journal article" date="2006" name="Science">
        <title>Genome of rice cluster I archaea -- the key methane producers in the rice rhizosphere.</title>
        <authorList>
            <person name="Erkel C."/>
            <person name="Kube M."/>
            <person name="Reinhardt R."/>
            <person name="Liesack W."/>
        </authorList>
    </citation>
    <scope>NUCLEOTIDE SEQUENCE [LARGE SCALE GENOMIC DNA]</scope>
    <source>
        <strain>DSM 22066 / NBRC 105507 / MRE50</strain>
    </source>
</reference>
<dbReference type="EC" id="2.7.1.237" evidence="1"/>
<dbReference type="EMBL" id="AM114193">
    <property type="protein sequence ID" value="CAJ36029.1"/>
    <property type="molecule type" value="Genomic_DNA"/>
</dbReference>
<dbReference type="RefSeq" id="WP_012036478.1">
    <property type="nucleotide sequence ID" value="NC_009464.1"/>
</dbReference>
<dbReference type="SMR" id="Q0W6G4"/>
<dbReference type="STRING" id="351160.RCIX625"/>
<dbReference type="GeneID" id="5144844"/>
<dbReference type="KEGG" id="rci:RCIX625"/>
<dbReference type="PATRIC" id="fig|351160.9.peg.2206"/>
<dbReference type="eggNOG" id="arCOG04076">
    <property type="taxonomic scope" value="Archaea"/>
</dbReference>
<dbReference type="OrthoDB" id="15447at2157"/>
<dbReference type="UniPathway" id="UPA00241"/>
<dbReference type="Proteomes" id="UP000000663">
    <property type="component" value="Chromosome"/>
</dbReference>
<dbReference type="GO" id="GO:0005525">
    <property type="term" value="F:GTP binding"/>
    <property type="evidence" value="ECO:0007669"/>
    <property type="project" value="UniProtKB-UniRule"/>
</dbReference>
<dbReference type="GO" id="GO:0016301">
    <property type="term" value="F:kinase activity"/>
    <property type="evidence" value="ECO:0007669"/>
    <property type="project" value="UniProtKB-UniRule"/>
</dbReference>
<dbReference type="GO" id="GO:0015937">
    <property type="term" value="P:coenzyme A biosynthetic process"/>
    <property type="evidence" value="ECO:0007669"/>
    <property type="project" value="UniProtKB-UniRule"/>
</dbReference>
<dbReference type="HAMAP" id="MF_00590">
    <property type="entry name" value="Dephospho_CoA_kinase_GTP_dep"/>
    <property type="match status" value="1"/>
</dbReference>
<dbReference type="InterPro" id="IPR007164">
    <property type="entry name" value="GTP-dep_dephospho-CoA_kin"/>
</dbReference>
<dbReference type="PANTHER" id="PTHR40732:SF1">
    <property type="entry name" value="GTP-DEPENDENT DEPHOSPHO-COA KINASE"/>
    <property type="match status" value="1"/>
</dbReference>
<dbReference type="PANTHER" id="PTHR40732">
    <property type="entry name" value="UPF0218 PROTEIN TK1697"/>
    <property type="match status" value="1"/>
</dbReference>
<dbReference type="Pfam" id="PF04019">
    <property type="entry name" value="DUF359"/>
    <property type="match status" value="1"/>
</dbReference>
<dbReference type="PIRSF" id="PIRSF006533">
    <property type="entry name" value="UCP006533"/>
    <property type="match status" value="1"/>
</dbReference>